<reference key="1">
    <citation type="journal article" date="2005" name="J. Mammal.">
        <title>Phylogenetics of the new world rodent family Heteromyidae.</title>
        <authorList>
            <person name="Alexander L.F."/>
            <person name="Riddle B.R."/>
        </authorList>
    </citation>
    <scope>NUCLEOTIDE SEQUENCE [GENOMIC DNA]</scope>
    <source>
        <strain>Isolate LVT 4935</strain>
    </source>
</reference>
<gene>
    <name type="primary">MT-CYB</name>
    <name type="synonym">COB</name>
    <name type="synonym">CYTB</name>
    <name type="synonym">MTCYB</name>
</gene>
<keyword id="KW-0249">Electron transport</keyword>
<keyword id="KW-0349">Heme</keyword>
<keyword id="KW-0408">Iron</keyword>
<keyword id="KW-0472">Membrane</keyword>
<keyword id="KW-0479">Metal-binding</keyword>
<keyword id="KW-0496">Mitochondrion</keyword>
<keyword id="KW-0999">Mitochondrion inner membrane</keyword>
<keyword id="KW-0679">Respiratory chain</keyword>
<keyword id="KW-0812">Transmembrane</keyword>
<keyword id="KW-1133">Transmembrane helix</keyword>
<keyword id="KW-0813">Transport</keyword>
<keyword id="KW-0830">Ubiquinone</keyword>
<evidence type="ECO:0000250" key="1"/>
<evidence type="ECO:0000250" key="2">
    <source>
        <dbReference type="UniProtKB" id="P00157"/>
    </source>
</evidence>
<evidence type="ECO:0000255" key="3">
    <source>
        <dbReference type="PROSITE-ProRule" id="PRU00967"/>
    </source>
</evidence>
<evidence type="ECO:0000255" key="4">
    <source>
        <dbReference type="PROSITE-ProRule" id="PRU00968"/>
    </source>
</evidence>
<geneLocation type="mitochondrion"/>
<name>CYB_DIPMI</name>
<accession>Q508L8</accession>
<feature type="chain" id="PRO_0000255043" description="Cytochrome b">
    <location>
        <begin position="1"/>
        <end position="379"/>
    </location>
</feature>
<feature type="transmembrane region" description="Helical" evidence="2">
    <location>
        <begin position="33"/>
        <end position="53"/>
    </location>
</feature>
<feature type="transmembrane region" description="Helical" evidence="2">
    <location>
        <begin position="77"/>
        <end position="98"/>
    </location>
</feature>
<feature type="transmembrane region" description="Helical" evidence="2">
    <location>
        <begin position="113"/>
        <end position="133"/>
    </location>
</feature>
<feature type="transmembrane region" description="Helical" evidence="2">
    <location>
        <begin position="178"/>
        <end position="198"/>
    </location>
</feature>
<feature type="transmembrane region" description="Helical" evidence="2">
    <location>
        <begin position="226"/>
        <end position="246"/>
    </location>
</feature>
<feature type="transmembrane region" description="Helical" evidence="2">
    <location>
        <begin position="288"/>
        <end position="308"/>
    </location>
</feature>
<feature type="transmembrane region" description="Helical" evidence="2">
    <location>
        <begin position="320"/>
        <end position="340"/>
    </location>
</feature>
<feature type="transmembrane region" description="Helical" evidence="2">
    <location>
        <begin position="347"/>
        <end position="367"/>
    </location>
</feature>
<feature type="binding site" description="axial binding residue" evidence="2">
    <location>
        <position position="83"/>
    </location>
    <ligand>
        <name>heme b</name>
        <dbReference type="ChEBI" id="CHEBI:60344"/>
        <label>b562</label>
    </ligand>
    <ligandPart>
        <name>Fe</name>
        <dbReference type="ChEBI" id="CHEBI:18248"/>
    </ligandPart>
</feature>
<feature type="binding site" description="axial binding residue" evidence="2">
    <location>
        <position position="97"/>
    </location>
    <ligand>
        <name>heme b</name>
        <dbReference type="ChEBI" id="CHEBI:60344"/>
        <label>b566</label>
    </ligand>
    <ligandPart>
        <name>Fe</name>
        <dbReference type="ChEBI" id="CHEBI:18248"/>
    </ligandPart>
</feature>
<feature type="binding site" description="axial binding residue" evidence="2">
    <location>
        <position position="182"/>
    </location>
    <ligand>
        <name>heme b</name>
        <dbReference type="ChEBI" id="CHEBI:60344"/>
        <label>b562</label>
    </ligand>
    <ligandPart>
        <name>Fe</name>
        <dbReference type="ChEBI" id="CHEBI:18248"/>
    </ligandPart>
</feature>
<feature type="binding site" description="axial binding residue" evidence="2">
    <location>
        <position position="196"/>
    </location>
    <ligand>
        <name>heme b</name>
        <dbReference type="ChEBI" id="CHEBI:60344"/>
        <label>b566</label>
    </ligand>
    <ligandPart>
        <name>Fe</name>
        <dbReference type="ChEBI" id="CHEBI:18248"/>
    </ligandPart>
</feature>
<feature type="binding site" evidence="2">
    <location>
        <position position="201"/>
    </location>
    <ligand>
        <name>a ubiquinone</name>
        <dbReference type="ChEBI" id="CHEBI:16389"/>
    </ligand>
</feature>
<organism>
    <name type="scientific">Dipodomys microps</name>
    <name type="common">Chisel-toothed kangaroo rat</name>
    <dbReference type="NCBI Taxonomy" id="94248"/>
    <lineage>
        <taxon>Eukaryota</taxon>
        <taxon>Metazoa</taxon>
        <taxon>Chordata</taxon>
        <taxon>Craniata</taxon>
        <taxon>Vertebrata</taxon>
        <taxon>Euteleostomi</taxon>
        <taxon>Mammalia</taxon>
        <taxon>Eutheria</taxon>
        <taxon>Euarchontoglires</taxon>
        <taxon>Glires</taxon>
        <taxon>Rodentia</taxon>
        <taxon>Castorimorpha</taxon>
        <taxon>Heteromyidae</taxon>
        <taxon>Dipodomyinae</taxon>
        <taxon>Dipodomys</taxon>
    </lineage>
</organism>
<dbReference type="EMBL" id="AY926385">
    <property type="protein sequence ID" value="AAY23228.1"/>
    <property type="molecule type" value="Genomic_DNA"/>
</dbReference>
<dbReference type="SMR" id="Q508L8"/>
<dbReference type="GO" id="GO:0005743">
    <property type="term" value="C:mitochondrial inner membrane"/>
    <property type="evidence" value="ECO:0007669"/>
    <property type="project" value="UniProtKB-SubCell"/>
</dbReference>
<dbReference type="GO" id="GO:0045275">
    <property type="term" value="C:respiratory chain complex III"/>
    <property type="evidence" value="ECO:0007669"/>
    <property type="project" value="InterPro"/>
</dbReference>
<dbReference type="GO" id="GO:0046872">
    <property type="term" value="F:metal ion binding"/>
    <property type="evidence" value="ECO:0007669"/>
    <property type="project" value="UniProtKB-KW"/>
</dbReference>
<dbReference type="GO" id="GO:0008121">
    <property type="term" value="F:ubiquinol-cytochrome-c reductase activity"/>
    <property type="evidence" value="ECO:0007669"/>
    <property type="project" value="InterPro"/>
</dbReference>
<dbReference type="GO" id="GO:0006122">
    <property type="term" value="P:mitochondrial electron transport, ubiquinol to cytochrome c"/>
    <property type="evidence" value="ECO:0007669"/>
    <property type="project" value="TreeGrafter"/>
</dbReference>
<dbReference type="CDD" id="cd00290">
    <property type="entry name" value="cytochrome_b_C"/>
    <property type="match status" value="1"/>
</dbReference>
<dbReference type="CDD" id="cd00284">
    <property type="entry name" value="Cytochrome_b_N"/>
    <property type="match status" value="1"/>
</dbReference>
<dbReference type="FunFam" id="1.20.810.10:FF:000002">
    <property type="entry name" value="Cytochrome b"/>
    <property type="match status" value="1"/>
</dbReference>
<dbReference type="Gene3D" id="1.20.810.10">
    <property type="entry name" value="Cytochrome Bc1 Complex, Chain C"/>
    <property type="match status" value="1"/>
</dbReference>
<dbReference type="InterPro" id="IPR005798">
    <property type="entry name" value="Cyt_b/b6_C"/>
</dbReference>
<dbReference type="InterPro" id="IPR036150">
    <property type="entry name" value="Cyt_b/b6_C_sf"/>
</dbReference>
<dbReference type="InterPro" id="IPR005797">
    <property type="entry name" value="Cyt_b/b6_N"/>
</dbReference>
<dbReference type="InterPro" id="IPR027387">
    <property type="entry name" value="Cytb/b6-like_sf"/>
</dbReference>
<dbReference type="InterPro" id="IPR030689">
    <property type="entry name" value="Cytochrome_b"/>
</dbReference>
<dbReference type="InterPro" id="IPR048260">
    <property type="entry name" value="Cytochrome_b_C_euk/bac"/>
</dbReference>
<dbReference type="InterPro" id="IPR048259">
    <property type="entry name" value="Cytochrome_b_N_euk/bac"/>
</dbReference>
<dbReference type="InterPro" id="IPR016174">
    <property type="entry name" value="Di-haem_cyt_TM"/>
</dbReference>
<dbReference type="PANTHER" id="PTHR19271">
    <property type="entry name" value="CYTOCHROME B"/>
    <property type="match status" value="1"/>
</dbReference>
<dbReference type="PANTHER" id="PTHR19271:SF16">
    <property type="entry name" value="CYTOCHROME B"/>
    <property type="match status" value="1"/>
</dbReference>
<dbReference type="Pfam" id="PF00032">
    <property type="entry name" value="Cytochrom_B_C"/>
    <property type="match status" value="1"/>
</dbReference>
<dbReference type="Pfam" id="PF00033">
    <property type="entry name" value="Cytochrome_B"/>
    <property type="match status" value="1"/>
</dbReference>
<dbReference type="PIRSF" id="PIRSF038885">
    <property type="entry name" value="COB"/>
    <property type="match status" value="1"/>
</dbReference>
<dbReference type="SUPFAM" id="SSF81648">
    <property type="entry name" value="a domain/subunit of cytochrome bc1 complex (Ubiquinol-cytochrome c reductase)"/>
    <property type="match status" value="1"/>
</dbReference>
<dbReference type="SUPFAM" id="SSF81342">
    <property type="entry name" value="Transmembrane di-heme cytochromes"/>
    <property type="match status" value="1"/>
</dbReference>
<dbReference type="PROSITE" id="PS51003">
    <property type="entry name" value="CYTB_CTER"/>
    <property type="match status" value="1"/>
</dbReference>
<dbReference type="PROSITE" id="PS51002">
    <property type="entry name" value="CYTB_NTER"/>
    <property type="match status" value="1"/>
</dbReference>
<sequence length="379" mass="42920">MTIMRKTHPLMKLVNHAFIDLPTPSNISGWWNFGSLLGLCLMIQIASGLFLAMHYTPDTLTAFSSVTHICRDVNYGWLIRYIHANGASLFFICLYLHIGRGIYYGSYFYVETWNIGIILLFLTMATAFMGYVLPWGQMSFWGATVITNLLSAIPYIGTDLVEWIWGGFSVDKATLNRFFAFHFILPFIIAAVAMVHLLFLHETGSNNPLGIPSDCDKIPFHPYYTIKDFLGIVLLLTFFFTLVLFFPDLLGDPDNYSPANPLNTPPHIKPEWYFLFAYAILRSIPNKLGGVIALVMSILILALLPHIQTAKQRSLMFRPISQLLFWLLVSDVLVLTWIGGQPVEPPFIIIGQIASILYFAIILILMPIAGIIENKMLKW</sequence>
<protein>
    <recommendedName>
        <fullName>Cytochrome b</fullName>
    </recommendedName>
    <alternativeName>
        <fullName>Complex III subunit 3</fullName>
    </alternativeName>
    <alternativeName>
        <fullName>Complex III subunit III</fullName>
    </alternativeName>
    <alternativeName>
        <fullName>Cytochrome b-c1 complex subunit 3</fullName>
    </alternativeName>
    <alternativeName>
        <fullName>Ubiquinol-cytochrome-c reductase complex cytochrome b subunit</fullName>
    </alternativeName>
</protein>
<proteinExistence type="inferred from homology"/>
<comment type="function">
    <text evidence="2">Component of the ubiquinol-cytochrome c reductase complex (complex III or cytochrome b-c1 complex) that is part of the mitochondrial respiratory chain. The b-c1 complex mediates electron transfer from ubiquinol to cytochrome c. Contributes to the generation of a proton gradient across the mitochondrial membrane that is then used for ATP synthesis.</text>
</comment>
<comment type="cofactor">
    <cofactor evidence="2">
        <name>heme b</name>
        <dbReference type="ChEBI" id="CHEBI:60344"/>
    </cofactor>
    <text evidence="2">Binds 2 heme b groups non-covalently.</text>
</comment>
<comment type="subunit">
    <text evidence="2">The cytochrome bc1 complex contains 11 subunits: 3 respiratory subunits (MT-CYB, CYC1 and UQCRFS1), 2 core proteins (UQCRC1 and UQCRC2) and 6 low-molecular weight proteins (UQCRH/QCR6, UQCRB/QCR7, UQCRQ/QCR8, UQCR10/QCR9, UQCR11/QCR10 and a cleavage product of UQCRFS1). This cytochrome bc1 complex then forms a dimer.</text>
</comment>
<comment type="subcellular location">
    <subcellularLocation>
        <location evidence="2">Mitochondrion inner membrane</location>
        <topology evidence="2">Multi-pass membrane protein</topology>
    </subcellularLocation>
</comment>
<comment type="miscellaneous">
    <text evidence="1">Heme 1 (or BL or b562) is low-potential and absorbs at about 562 nm, and heme 2 (or BH or b566) is high-potential and absorbs at about 566 nm.</text>
</comment>
<comment type="similarity">
    <text evidence="3 4">Belongs to the cytochrome b family.</text>
</comment>
<comment type="caution">
    <text evidence="2">The full-length protein contains only eight transmembrane helices, not nine as predicted by bioinformatics tools.</text>
</comment>